<evidence type="ECO:0000269" key="1">
    <source>
    </source>
</evidence>
<evidence type="ECO:0000303" key="2">
    <source>
    </source>
</evidence>
<evidence type="ECO:0000305" key="3"/>
<sequence>MQTHHDLPVSGVSAGEIASEGYDLDALLNQHFAGRVVRKDLTKQLKEGANVPVYVLEYLLGMYCASDDDDVVEQGLQNVKRILADNYVRPDEAEKVKSLIRERGSYKIIDKVSVKLNQKKDVYEAQLSNLGIKDALVPSQMVKDNEKLLTGGIWCMITVNYFFEEGQKTSPFSLMTLKPIQMPNMDMEEVFDARKHFNRDQWIDVLLRSVGMEPANIEQRTKWHLITRMIPFVENNYNVCELGPRGTGKSHVYKECSPNSLLVSGGQTTVANLFYNMASRQIGLVGMWDVVAFDEVAGITFKDKDGVQIMKDYMASGSFSRGRDSIEGKASMVFVGNINQSVETLVKTSHLLAPFPAAMIDTAFFDRFHAYIPGWEIPKMRPEFFTNRYGLITDYLAEYMREMRKRSFSDAIDKFFKLGNNLNQRDVIAVRRTVSGLLKLMHPDGAYSKEDVRVCLTYAMEVRRRVKEQLKKLGGLEFFDVNFSYIDNETLEEFFVSVPEQGGSELIPAGMPKPGVVHLVTQAESGMTGLYRFETQMTAGNGKHSVSGLGSNTSAKEAIRVGFDYFKGNLNRVSAAAKFSDHEYHLHVVELHNTGPSTATSLAALIALCSILLAKPVQEQMVVLGSMTLGGVINPVQDLAASLQLAFDSGAKRVLLPMSSAMDIPTVPAELFTKFQVSFYSDPVDAVYKALGVN</sequence>
<keyword id="KW-0051">Antiviral defense</keyword>
<keyword id="KW-0378">Hydrolase</keyword>
<keyword id="KW-0645">Protease</keyword>
<proteinExistence type="evidence at protein level"/>
<dbReference type="EMBL" id="CP000802">
    <property type="protein sequence ID" value="ABV04729.1"/>
    <property type="molecule type" value="Genomic_DNA"/>
</dbReference>
<dbReference type="RefSeq" id="WP_001193073.1">
    <property type="nucleotide sequence ID" value="NC_009800.1"/>
</dbReference>
<dbReference type="SMR" id="P0DUG1"/>
<dbReference type="GeneID" id="86944683"/>
<dbReference type="KEGG" id="ecx:EcHS_A0341"/>
<dbReference type="GO" id="GO:0005524">
    <property type="term" value="F:ATP binding"/>
    <property type="evidence" value="ECO:0007669"/>
    <property type="project" value="InterPro"/>
</dbReference>
<dbReference type="GO" id="GO:0004176">
    <property type="term" value="F:ATP-dependent peptidase activity"/>
    <property type="evidence" value="ECO:0007669"/>
    <property type="project" value="InterPro"/>
</dbReference>
<dbReference type="GO" id="GO:0004252">
    <property type="term" value="F:serine-type endopeptidase activity"/>
    <property type="evidence" value="ECO:0007669"/>
    <property type="project" value="InterPro"/>
</dbReference>
<dbReference type="GO" id="GO:0051607">
    <property type="term" value="P:defense response to virus"/>
    <property type="evidence" value="ECO:0007669"/>
    <property type="project" value="UniProtKB-KW"/>
</dbReference>
<dbReference type="GO" id="GO:0030163">
    <property type="term" value="P:protein catabolic process"/>
    <property type="evidence" value="ECO:0007669"/>
    <property type="project" value="InterPro"/>
</dbReference>
<dbReference type="GO" id="GO:0006508">
    <property type="term" value="P:proteolysis"/>
    <property type="evidence" value="ECO:0007669"/>
    <property type="project" value="UniProtKB-KW"/>
</dbReference>
<dbReference type="Gene3D" id="3.30.230.10">
    <property type="match status" value="1"/>
</dbReference>
<dbReference type="InterPro" id="IPR013473">
    <property type="entry name" value="BrxL"/>
</dbReference>
<dbReference type="InterPro" id="IPR014061">
    <property type="entry name" value="BrxL-like"/>
</dbReference>
<dbReference type="InterPro" id="IPR046838">
    <property type="entry name" value="BrxL_N"/>
</dbReference>
<dbReference type="InterPro" id="IPR008269">
    <property type="entry name" value="Lon_proteolytic"/>
</dbReference>
<dbReference type="InterPro" id="IPR027065">
    <property type="entry name" value="Lon_Prtase"/>
</dbReference>
<dbReference type="InterPro" id="IPR027417">
    <property type="entry name" value="P-loop_NTPase"/>
</dbReference>
<dbReference type="InterPro" id="IPR020568">
    <property type="entry name" value="Ribosomal_Su5_D2-typ_SF"/>
</dbReference>
<dbReference type="InterPro" id="IPR014721">
    <property type="entry name" value="Ribsml_uS5_D2-typ_fold_subgr"/>
</dbReference>
<dbReference type="NCBIfam" id="TIGR02688">
    <property type="entry name" value="BREX system Lon protease-like protein BrxL"/>
    <property type="match status" value="1"/>
</dbReference>
<dbReference type="NCBIfam" id="TIGR02653">
    <property type="entry name" value="Lon_rel_chp"/>
    <property type="match status" value="1"/>
</dbReference>
<dbReference type="PANTHER" id="PTHR10046">
    <property type="entry name" value="ATP DEPENDENT LON PROTEASE FAMILY MEMBER"/>
    <property type="match status" value="1"/>
</dbReference>
<dbReference type="Pfam" id="PF13337">
    <property type="entry name" value="BrxL_ATPase"/>
    <property type="match status" value="1"/>
</dbReference>
<dbReference type="Pfam" id="PF20442">
    <property type="entry name" value="BrxL_N"/>
    <property type="match status" value="1"/>
</dbReference>
<dbReference type="Pfam" id="PF05362">
    <property type="entry name" value="Lon_C"/>
    <property type="match status" value="1"/>
</dbReference>
<dbReference type="SUPFAM" id="SSF52540">
    <property type="entry name" value="P-loop containing nucleoside triphosphate hydrolases"/>
    <property type="match status" value="1"/>
</dbReference>
<dbReference type="SUPFAM" id="SSF54211">
    <property type="entry name" value="Ribosomal protein S5 domain 2-like"/>
    <property type="match status" value="1"/>
</dbReference>
<gene>
    <name evidence="2" type="primary">brxL</name>
    <name type="ordered locus">EcHS_A0341</name>
</gene>
<name>BRXL_ECOHS</name>
<reference key="1">
    <citation type="journal article" date="2008" name="J. Bacteriol.">
        <title>The pangenome structure of Escherichia coli: comparative genomic analysis of E. coli commensal and pathogenic isolates.</title>
        <authorList>
            <person name="Rasko D.A."/>
            <person name="Rosovitz M.J."/>
            <person name="Myers G.S.A."/>
            <person name="Mongodin E.F."/>
            <person name="Fricke W.F."/>
            <person name="Gajer P."/>
            <person name="Crabtree J."/>
            <person name="Sebaihia M."/>
            <person name="Thomson N.R."/>
            <person name="Chaudhuri R."/>
            <person name="Henderson I.R."/>
            <person name="Sperandio V."/>
            <person name="Ravel J."/>
        </authorList>
    </citation>
    <scope>NUCLEOTIDE SEQUENCE [LARGE SCALE GENOMIC DNA]</scope>
    <source>
        <strain>HS</strain>
    </source>
</reference>
<reference key="2">
    <citation type="journal article" date="2019" name="Nucleic Acids Res.">
        <title>BREX system of Escherichia coli distinguishes self from non-self by methylation of a specific DNA site.</title>
        <authorList>
            <person name="Gordeeva J."/>
            <person name="Morozova N."/>
            <person name="Sierro N."/>
            <person name="Isaev A."/>
            <person name="Sinkunas T."/>
            <person name="Tsvetkova K."/>
            <person name="Matlashov M."/>
            <person name="Truncaite L."/>
            <person name="Morgan R.D."/>
            <person name="Ivanov N.V."/>
            <person name="Siksnys V."/>
            <person name="Zeng L."/>
            <person name="Severinov K."/>
        </authorList>
    </citation>
    <scope>FUNCTION IN ANTIVIRAL DEFENSE</scope>
    <scope>INDUCTION</scope>
    <scope>DISRUPTION PHENOTYPE</scope>
    <source>
        <strain>HS</strain>
    </source>
</reference>
<accession>P0DUG1</accession>
<accession>A0A7M3S2P6</accession>
<comment type="function">
    <text evidence="1">BREX systems (bacteriophage exclusion) provide immunity against bacteriophage. Part of a type 1 BREX system which protects against dsDNA phage. This system allows phage adsorption but prevents phage DNA replication, without degradation of the phage DNA. Methylation of bacterial DNA by PglX guides self/non-self discrimination. When the brxA-brxB-brxC-pglX-pglZ-brxL genes are transformed into a susceptible E.coli strain (BW25113) they confer very high resistance to infection by bacteriophage VR7 and VpaE1, about 100-fold protection against lambda, T5 and T7 and no protection against RNA phage Qbeta, ssDNA phage M13 or dSDNA phage T4 and VR5. Glycosylated phage DNA is not susceptible to BREX. The BREX system does not confer resistance to lysogenic lambda phage, i.e. prophage that are integrated into the chromosomal DNA and then induced to form phage. Expression of this protein alone is toxic.</text>
</comment>
<comment type="induction">
    <text evidence="1">Transcribed at similar levels in lag and exponential phase, rises in stationary phase.</text>
</comment>
<comment type="disruption phenotype">
    <text evidence="1">Methylation of 5'-GGTAAG-3' in chromosomal DNA, however BREX no longer confers phage resistance.</text>
</comment>
<comment type="similarity">
    <text evidence="3">Belongs to the BrxL family.</text>
</comment>
<organism>
    <name type="scientific">Escherichia coli O9:H4 (strain HS)</name>
    <dbReference type="NCBI Taxonomy" id="331112"/>
    <lineage>
        <taxon>Bacteria</taxon>
        <taxon>Pseudomonadati</taxon>
        <taxon>Pseudomonadota</taxon>
        <taxon>Gammaproteobacteria</taxon>
        <taxon>Enterobacterales</taxon>
        <taxon>Enterobacteriaceae</taxon>
        <taxon>Escherichia</taxon>
    </lineage>
</organism>
<protein>
    <recommendedName>
        <fullName evidence="2">Lon-like protease BrxL</fullName>
    </recommendedName>
    <alternativeName>
        <fullName evidence="2">BREX protein BrxL</fullName>
    </alternativeName>
</protein>
<feature type="chain" id="PRO_0000452160" description="Lon-like protease BrxL">
    <location>
        <begin position="1"/>
        <end position="694"/>
    </location>
</feature>